<protein>
    <recommendedName>
        <fullName>Insulin-like 3</fullName>
    </recommendedName>
    <alternativeName>
        <fullName>Leydig insulin-like peptide</fullName>
        <shortName>Ley-I-L</shortName>
    </alternativeName>
    <alternativeName>
        <fullName>Relaxin-like factor</fullName>
    </alternativeName>
    <component>
        <recommendedName>
            <fullName>Insulin-like 3 B chain</fullName>
        </recommendedName>
    </component>
    <component>
        <recommendedName>
            <fullName>Insulin-like 3 A chain</fullName>
        </recommendedName>
    </component>
</protein>
<organism>
    <name type="scientific">Callithrix jacchus</name>
    <name type="common">White-tufted-ear marmoset</name>
    <dbReference type="NCBI Taxonomy" id="9483"/>
    <lineage>
        <taxon>Eukaryota</taxon>
        <taxon>Metazoa</taxon>
        <taxon>Chordata</taxon>
        <taxon>Craniata</taxon>
        <taxon>Vertebrata</taxon>
        <taxon>Euteleostomi</taxon>
        <taxon>Mammalia</taxon>
        <taxon>Eutheria</taxon>
        <taxon>Euarchontoglires</taxon>
        <taxon>Primates</taxon>
        <taxon>Haplorrhini</taxon>
        <taxon>Platyrrhini</taxon>
        <taxon>Cebidae</taxon>
        <taxon>Callitrichinae</taxon>
        <taxon>Callithrix</taxon>
        <taxon>Callithrix</taxon>
    </lineage>
</organism>
<name>INSL3_CALJA</name>
<accession>O97937</accession>
<accession>O97938</accession>
<feature type="signal peptide" evidence="2">
    <location>
        <begin position="1"/>
        <end position="24"/>
    </location>
</feature>
<feature type="peptide" id="PRO_0000016134" description="Insulin-like 3 B chain">
    <location>
        <begin position="25"/>
        <end position="55"/>
    </location>
</feature>
<feature type="propeptide" id="PRO_0000016135" description="C peptide like" evidence="2">
    <location>
        <begin position="58"/>
        <end position="104"/>
    </location>
</feature>
<feature type="peptide" id="PRO_0000016136" description="Insulin-like 3 A chain">
    <location>
        <begin position="107"/>
        <end position="131"/>
    </location>
</feature>
<feature type="region of interest" description="Disordered" evidence="3">
    <location>
        <begin position="86"/>
        <end position="105"/>
    </location>
</feature>
<feature type="disulfide bond" description="Interchain (between B and A chains)" evidence="1">
    <location>
        <begin position="34"/>
        <end position="117"/>
    </location>
</feature>
<feature type="disulfide bond" description="Interchain (between B and A chains)" evidence="1">
    <location>
        <begin position="46"/>
        <end position="130"/>
    </location>
</feature>
<feature type="disulfide bond" evidence="1">
    <location>
        <begin position="116"/>
        <end position="121"/>
    </location>
</feature>
<feature type="splice variant" id="VSP_002715" description="In isoform 2." evidence="4">
    <original>GELLQWLERRH</original>
    <variation>ESHSAAQDGGQ</variation>
    <location>
        <begin position="64"/>
        <end position="74"/>
    </location>
</feature>
<feature type="splice variant" id="VSP_002716" description="In isoform 2." evidence="4">
    <location>
        <begin position="75"/>
        <end position="131"/>
    </location>
</feature>
<sequence length="131" mass="14253">MDPRLPAWALVLLGPALVFALGPAPTPEMREKLCGHHFVRALVRVCGGPLWSTEARRPVAAGDGELLQWLERRHLLYGLVANSEPAPGGPGLQPMPQTSHHHRHRRAAASNPARYCCLSGCSQQDLLTLCP</sequence>
<keyword id="KW-0025">Alternative splicing</keyword>
<keyword id="KW-0165">Cleavage on pair of basic residues</keyword>
<keyword id="KW-1015">Disulfide bond</keyword>
<keyword id="KW-0372">Hormone</keyword>
<keyword id="KW-1185">Reference proteome</keyword>
<keyword id="KW-0964">Secreted</keyword>
<keyword id="KW-0732">Signal</keyword>
<evidence type="ECO:0000250" key="1"/>
<evidence type="ECO:0000255" key="2"/>
<evidence type="ECO:0000256" key="3">
    <source>
        <dbReference type="SAM" id="MobiDB-lite"/>
    </source>
</evidence>
<evidence type="ECO:0000305" key="4"/>
<dbReference type="EMBL" id="AJ011961">
    <property type="protein sequence ID" value="CAA09888.1"/>
    <property type="molecule type" value="Genomic_DNA"/>
</dbReference>
<dbReference type="EMBL" id="AJ011962">
    <property type="protein sequence ID" value="CAA09888.1"/>
    <property type="status" value="JOINED"/>
    <property type="molecule type" value="Genomic_DNA"/>
</dbReference>
<dbReference type="EMBL" id="AJ011961">
    <property type="protein sequence ID" value="CAA09889.1"/>
    <property type="molecule type" value="Genomic_DNA"/>
</dbReference>
<dbReference type="RefSeq" id="XP_017823698.1">
    <molecule id="O97937-1"/>
    <property type="nucleotide sequence ID" value="XM_017968209.2"/>
</dbReference>
<dbReference type="FunCoup" id="O97937">
    <property type="interactions" value="525"/>
</dbReference>
<dbReference type="Ensembl" id="ENSCJAT00000134873.1">
    <molecule id="O97937-1"/>
    <property type="protein sequence ID" value="ENSCJAP00000086449.1"/>
    <property type="gene ID" value="ENSCJAG00000074898.1"/>
</dbReference>
<dbReference type="GeneID" id="100404744"/>
<dbReference type="KEGG" id="cjc:100404744"/>
<dbReference type="CTD" id="3640"/>
<dbReference type="eggNOG" id="ENOG502TFQI">
    <property type="taxonomic scope" value="Eukaryota"/>
</dbReference>
<dbReference type="GeneTree" id="ENSGT00940000163613"/>
<dbReference type="HOGENOM" id="CLU_164865_0_0_1"/>
<dbReference type="InParanoid" id="O97937"/>
<dbReference type="OMA" id="NPAHHCC"/>
<dbReference type="OrthoDB" id="9448185at2759"/>
<dbReference type="Proteomes" id="UP000008225">
    <property type="component" value="Chromosome 22"/>
</dbReference>
<dbReference type="GO" id="GO:0005615">
    <property type="term" value="C:extracellular space"/>
    <property type="evidence" value="ECO:0007669"/>
    <property type="project" value="TreeGrafter"/>
</dbReference>
<dbReference type="GO" id="GO:0001664">
    <property type="term" value="F:G protein-coupled receptor binding"/>
    <property type="evidence" value="ECO:0007669"/>
    <property type="project" value="TreeGrafter"/>
</dbReference>
<dbReference type="GO" id="GO:0005179">
    <property type="term" value="F:hormone activity"/>
    <property type="evidence" value="ECO:0007669"/>
    <property type="project" value="UniProtKB-KW"/>
</dbReference>
<dbReference type="GO" id="GO:0002020">
    <property type="term" value="F:protease binding"/>
    <property type="evidence" value="ECO:0007669"/>
    <property type="project" value="Ensembl"/>
</dbReference>
<dbReference type="GO" id="GO:0007193">
    <property type="term" value="P:adenylate cyclase-inhibiting G protein-coupled receptor signaling pathway"/>
    <property type="evidence" value="ECO:0007669"/>
    <property type="project" value="TreeGrafter"/>
</dbReference>
<dbReference type="GO" id="GO:0010634">
    <property type="term" value="P:positive regulation of epithelial cell migration"/>
    <property type="evidence" value="ECO:0007669"/>
    <property type="project" value="Ensembl"/>
</dbReference>
<dbReference type="GO" id="GO:0090303">
    <property type="term" value="P:positive regulation of wound healing"/>
    <property type="evidence" value="ECO:0007669"/>
    <property type="project" value="Ensembl"/>
</dbReference>
<dbReference type="CDD" id="cd04365">
    <property type="entry name" value="IlGF_relaxin_like"/>
    <property type="match status" value="1"/>
</dbReference>
<dbReference type="Gene3D" id="1.10.100.10">
    <property type="entry name" value="Insulin-like"/>
    <property type="match status" value="1"/>
</dbReference>
<dbReference type="InterPro" id="IPR043387">
    <property type="entry name" value="INSL3/INSL4"/>
</dbReference>
<dbReference type="InterPro" id="IPR016179">
    <property type="entry name" value="Insulin-like"/>
</dbReference>
<dbReference type="InterPro" id="IPR036438">
    <property type="entry name" value="Insulin-like_sf"/>
</dbReference>
<dbReference type="InterPro" id="IPR022353">
    <property type="entry name" value="Insulin_CS"/>
</dbReference>
<dbReference type="PANTHER" id="PTHR10423">
    <property type="entry name" value="INSULIN-LIKE 3"/>
    <property type="match status" value="1"/>
</dbReference>
<dbReference type="PANTHER" id="PTHR10423:SF3">
    <property type="entry name" value="INSULIN-LIKE 3"/>
    <property type="match status" value="1"/>
</dbReference>
<dbReference type="Pfam" id="PF00049">
    <property type="entry name" value="Insulin"/>
    <property type="match status" value="1"/>
</dbReference>
<dbReference type="SMART" id="SM00078">
    <property type="entry name" value="IlGF"/>
    <property type="match status" value="1"/>
</dbReference>
<dbReference type="SUPFAM" id="SSF56994">
    <property type="entry name" value="Insulin-like"/>
    <property type="match status" value="1"/>
</dbReference>
<dbReference type="PROSITE" id="PS00262">
    <property type="entry name" value="INSULIN"/>
    <property type="match status" value="1"/>
</dbReference>
<reference key="1">
    <citation type="journal article" date="1999" name="Biol. Reprod.">
        <title>Differential splicing and expression of the relaxin-like factor gene in reproductive tissues of the marmoset monkey (Callithrix jacchus).</title>
        <authorList>
            <person name="Zarreh-Hoshyari-Khah M."/>
            <person name="Einspanier A."/>
            <person name="Ivell R."/>
        </authorList>
    </citation>
    <scope>NUCLEOTIDE SEQUENCE [GENOMIC DNA]</scope>
    <scope>ALTERNATIVE SPLICING</scope>
</reference>
<gene>
    <name type="primary">INSL3</name>
    <name type="synonym">RLF</name>
</gene>
<comment type="function">
    <text evidence="1">Seems to play a role in testicular function. May be a trophic hormone with a role in testicular descent in fetal life. Is a ligand for LGR8 receptor (By similarity).</text>
</comment>
<comment type="subunit">
    <text evidence="1">Heterodimer of a B chain and an A chain linked by two disulfide bonds.</text>
</comment>
<comment type="subcellular location">
    <subcellularLocation>
        <location>Secreted</location>
    </subcellularLocation>
</comment>
<comment type="alternative products">
    <event type="alternative splicing"/>
    <isoform>
        <id>O97937-1</id>
        <name>1</name>
        <sequence type="displayed"/>
    </isoform>
    <isoform>
        <id>O97937-2</id>
        <name>2</name>
        <name>Truncated</name>
        <sequence type="described" ref="VSP_002715 VSP_002716"/>
    </isoform>
</comment>
<comment type="tissue specificity">
    <text>Highest expression in the Leydig cells of the testis.</text>
</comment>
<comment type="similarity">
    <text evidence="4">Belongs to the insulin family.</text>
</comment>
<proteinExistence type="evidence at transcript level"/>